<reference key="1">
    <citation type="journal article" date="1997" name="Gene">
        <title>Organization of a large gene cluster encoding ribosomal proteins in the cyanobacterium Synechococcus sp. strain PCC 6301: comparison of gene clusters among cyanobacteria, eubacteria and chloroplast genomes.</title>
        <authorList>
            <person name="Sugita M."/>
            <person name="Sugishita H."/>
            <person name="Fujishiro T."/>
            <person name="Tsuboi M."/>
            <person name="Sugita C."/>
            <person name="Endo T."/>
            <person name="Sugiura M."/>
        </authorList>
    </citation>
    <scope>NUCLEOTIDE SEQUENCE [GENOMIC DNA]</scope>
</reference>
<reference key="2">
    <citation type="journal article" date="2007" name="Photosyn. Res.">
        <title>Complete nucleotide sequence of the freshwater unicellular cyanobacterium Synechococcus elongatus PCC 6301 chromosome: gene content and organization.</title>
        <authorList>
            <person name="Sugita C."/>
            <person name="Ogata K."/>
            <person name="Shikata M."/>
            <person name="Jikuya H."/>
            <person name="Takano J."/>
            <person name="Furumichi M."/>
            <person name="Kanehisa M."/>
            <person name="Omata T."/>
            <person name="Sugiura M."/>
            <person name="Sugita M."/>
        </authorList>
    </citation>
    <scope>NUCLEOTIDE SEQUENCE [LARGE SCALE GENOMIC DNA]</scope>
    <source>
        <strain>ATCC 27144 / PCC 6301 / SAUG 1402/1</strain>
    </source>
</reference>
<name>RL23_SYNP6</name>
<comment type="function">
    <text evidence="1">One of the early assembly proteins it binds 23S rRNA. One of the proteins that surrounds the polypeptide exit tunnel on the outside of the ribosome. Forms the main docking site for trigger factor binding to the ribosome.</text>
</comment>
<comment type="subunit">
    <text evidence="1">Part of the 50S ribosomal subunit. Contacts protein L29, and trigger factor when it is bound to the ribosome.</text>
</comment>
<comment type="similarity">
    <text evidence="1">Belongs to the universal ribosomal protein uL23 family.</text>
</comment>
<organism>
    <name type="scientific">Synechococcus sp. (strain ATCC 27144 / PCC 6301 / SAUG 1402/1)</name>
    <name type="common">Anacystis nidulans</name>
    <dbReference type="NCBI Taxonomy" id="269084"/>
    <lineage>
        <taxon>Bacteria</taxon>
        <taxon>Bacillati</taxon>
        <taxon>Cyanobacteriota</taxon>
        <taxon>Cyanophyceae</taxon>
        <taxon>Synechococcales</taxon>
        <taxon>Synechococcaceae</taxon>
        <taxon>Synechococcus</taxon>
    </lineage>
</organism>
<accession>O24691</accession>
<dbReference type="EMBL" id="AB000111">
    <property type="protein sequence ID" value="BAA22451.1"/>
    <property type="molecule type" value="Genomic_DNA"/>
</dbReference>
<dbReference type="EMBL" id="AP008231">
    <property type="protein sequence ID" value="BAD80057.1"/>
    <property type="molecule type" value="Genomic_DNA"/>
</dbReference>
<dbReference type="RefSeq" id="WP_011244177.1">
    <property type="nucleotide sequence ID" value="NZ_CP085785.1"/>
</dbReference>
<dbReference type="SMR" id="O24691"/>
<dbReference type="KEGG" id="syc:syc1867_d"/>
<dbReference type="eggNOG" id="COG0089">
    <property type="taxonomic scope" value="Bacteria"/>
</dbReference>
<dbReference type="Proteomes" id="UP000001175">
    <property type="component" value="Chromosome"/>
</dbReference>
<dbReference type="GO" id="GO:1990904">
    <property type="term" value="C:ribonucleoprotein complex"/>
    <property type="evidence" value="ECO:0007669"/>
    <property type="project" value="UniProtKB-KW"/>
</dbReference>
<dbReference type="GO" id="GO:0005840">
    <property type="term" value="C:ribosome"/>
    <property type="evidence" value="ECO:0007669"/>
    <property type="project" value="UniProtKB-KW"/>
</dbReference>
<dbReference type="GO" id="GO:0019843">
    <property type="term" value="F:rRNA binding"/>
    <property type="evidence" value="ECO:0007669"/>
    <property type="project" value="UniProtKB-UniRule"/>
</dbReference>
<dbReference type="GO" id="GO:0003735">
    <property type="term" value="F:structural constituent of ribosome"/>
    <property type="evidence" value="ECO:0007669"/>
    <property type="project" value="InterPro"/>
</dbReference>
<dbReference type="GO" id="GO:0006412">
    <property type="term" value="P:translation"/>
    <property type="evidence" value="ECO:0007669"/>
    <property type="project" value="UniProtKB-UniRule"/>
</dbReference>
<dbReference type="FunFam" id="3.30.70.330:FF:000001">
    <property type="entry name" value="50S ribosomal protein L23"/>
    <property type="match status" value="1"/>
</dbReference>
<dbReference type="Gene3D" id="3.30.70.330">
    <property type="match status" value="1"/>
</dbReference>
<dbReference type="HAMAP" id="MF_01369_B">
    <property type="entry name" value="Ribosomal_uL23_B"/>
    <property type="match status" value="1"/>
</dbReference>
<dbReference type="InterPro" id="IPR012677">
    <property type="entry name" value="Nucleotide-bd_a/b_plait_sf"/>
</dbReference>
<dbReference type="InterPro" id="IPR013025">
    <property type="entry name" value="Ribosomal_uL23-like"/>
</dbReference>
<dbReference type="InterPro" id="IPR012678">
    <property type="entry name" value="Ribosomal_uL23/eL15/eS24_sf"/>
</dbReference>
<dbReference type="NCBIfam" id="NF004363">
    <property type="entry name" value="PRK05738.2-4"/>
    <property type="match status" value="1"/>
</dbReference>
<dbReference type="NCBIfam" id="NF004368">
    <property type="entry name" value="PRK05738.3-4"/>
    <property type="match status" value="1"/>
</dbReference>
<dbReference type="PANTHER" id="PTHR11620">
    <property type="entry name" value="60S RIBOSOMAL PROTEIN L23A"/>
    <property type="match status" value="1"/>
</dbReference>
<dbReference type="Pfam" id="PF00276">
    <property type="entry name" value="Ribosomal_L23"/>
    <property type="match status" value="1"/>
</dbReference>
<dbReference type="SUPFAM" id="SSF54189">
    <property type="entry name" value="Ribosomal proteins S24e, L23 and L15e"/>
    <property type="match status" value="1"/>
</dbReference>
<evidence type="ECO:0000255" key="1">
    <source>
        <dbReference type="HAMAP-Rule" id="MF_01369"/>
    </source>
</evidence>
<evidence type="ECO:0000305" key="2"/>
<keyword id="KW-0687">Ribonucleoprotein</keyword>
<keyword id="KW-0689">Ribosomal protein</keyword>
<keyword id="KW-0694">RNA-binding</keyword>
<keyword id="KW-0699">rRNA-binding</keyword>
<feature type="chain" id="PRO_0000129424" description="Large ribosomal subunit protein uL23">
    <location>
        <begin position="1"/>
        <end position="100"/>
    </location>
</feature>
<proteinExistence type="inferred from homology"/>
<gene>
    <name evidence="1" type="primary">rplW</name>
    <name evidence="1" type="synonym">rpl23</name>
    <name type="ordered locus">syc1867_d</name>
</gene>
<protein>
    <recommendedName>
        <fullName evidence="1">Large ribosomal subunit protein uL23</fullName>
    </recommendedName>
    <alternativeName>
        <fullName evidence="2">50S ribosomal protein L23</fullName>
    </alternativeName>
</protein>
<sequence>MAEANIRALADIIRRPIITEKATRLLENNQYTFEVDPRASKPEIKAAIEALFQVKVVGLSTQLPPRKARRVGRFAGHRAQVKRAVARLADGDSITLFPEV</sequence>